<organism>
    <name type="scientific">Bradyrhizobium diazoefficiens (strain JCM 10833 / BCRC 13528 / IAM 13628 / NBRC 14792 / USDA 110)</name>
    <dbReference type="NCBI Taxonomy" id="224911"/>
    <lineage>
        <taxon>Bacteria</taxon>
        <taxon>Pseudomonadati</taxon>
        <taxon>Pseudomonadota</taxon>
        <taxon>Alphaproteobacteria</taxon>
        <taxon>Hyphomicrobiales</taxon>
        <taxon>Nitrobacteraceae</taxon>
        <taxon>Bradyrhizobium</taxon>
    </lineage>
</organism>
<keyword id="KW-0046">Antibiotic resistance</keyword>
<keyword id="KW-0067">ATP-binding</keyword>
<keyword id="KW-0997">Cell inner membrane</keyword>
<keyword id="KW-1003">Cell membrane</keyword>
<keyword id="KW-0472">Membrane</keyword>
<keyword id="KW-0547">Nucleotide-binding</keyword>
<keyword id="KW-1185">Reference proteome</keyword>
<keyword id="KW-1278">Translocase</keyword>
<keyword id="KW-0812">Transmembrane</keyword>
<keyword id="KW-1133">Transmembrane helix</keyword>
<keyword id="KW-0813">Transport</keyword>
<dbReference type="EC" id="7.6.2.-" evidence="1"/>
<dbReference type="EMBL" id="BA000040">
    <property type="protein sequence ID" value="BAC48972.1"/>
    <property type="molecule type" value="Genomic_DNA"/>
</dbReference>
<dbReference type="RefSeq" id="NP_770347.1">
    <property type="nucleotide sequence ID" value="NC_004463.1"/>
</dbReference>
<dbReference type="RefSeq" id="WP_011086488.1">
    <property type="nucleotide sequence ID" value="NC_004463.1"/>
</dbReference>
<dbReference type="SMR" id="Q89NX6"/>
<dbReference type="FunCoup" id="Q89NX6">
    <property type="interactions" value="349"/>
</dbReference>
<dbReference type="STRING" id="224911.AAV28_15535"/>
<dbReference type="EnsemblBacteria" id="BAC48972">
    <property type="protein sequence ID" value="BAC48972"/>
    <property type="gene ID" value="BAC48972"/>
</dbReference>
<dbReference type="GeneID" id="46490717"/>
<dbReference type="KEGG" id="bja:bll3707"/>
<dbReference type="PATRIC" id="fig|224911.44.peg.3374"/>
<dbReference type="eggNOG" id="COG0577">
    <property type="taxonomic scope" value="Bacteria"/>
</dbReference>
<dbReference type="eggNOG" id="COG1136">
    <property type="taxonomic scope" value="Bacteria"/>
</dbReference>
<dbReference type="HOGENOM" id="CLU_000604_78_2_5"/>
<dbReference type="InParanoid" id="Q89NX6"/>
<dbReference type="OrthoDB" id="9786950at2"/>
<dbReference type="PhylomeDB" id="Q89NX6"/>
<dbReference type="Proteomes" id="UP000002526">
    <property type="component" value="Chromosome"/>
</dbReference>
<dbReference type="GO" id="GO:0005886">
    <property type="term" value="C:plasma membrane"/>
    <property type="evidence" value="ECO:0000318"/>
    <property type="project" value="GO_Central"/>
</dbReference>
<dbReference type="GO" id="GO:0005524">
    <property type="term" value="F:ATP binding"/>
    <property type="evidence" value="ECO:0007669"/>
    <property type="project" value="UniProtKB-KW"/>
</dbReference>
<dbReference type="GO" id="GO:0016887">
    <property type="term" value="F:ATP hydrolysis activity"/>
    <property type="evidence" value="ECO:0007669"/>
    <property type="project" value="InterPro"/>
</dbReference>
<dbReference type="GO" id="GO:0022857">
    <property type="term" value="F:transmembrane transporter activity"/>
    <property type="evidence" value="ECO:0000318"/>
    <property type="project" value="GO_Central"/>
</dbReference>
<dbReference type="GO" id="GO:0046677">
    <property type="term" value="P:response to antibiotic"/>
    <property type="evidence" value="ECO:0007669"/>
    <property type="project" value="UniProtKB-KW"/>
</dbReference>
<dbReference type="CDD" id="cd03255">
    <property type="entry name" value="ABC_MJ0796_LolCDE_FtsE"/>
    <property type="match status" value="1"/>
</dbReference>
<dbReference type="FunFam" id="3.40.50.300:FF:000032">
    <property type="entry name" value="Export ABC transporter ATP-binding protein"/>
    <property type="match status" value="1"/>
</dbReference>
<dbReference type="Gene3D" id="3.40.50.300">
    <property type="entry name" value="P-loop containing nucleotide triphosphate hydrolases"/>
    <property type="match status" value="1"/>
</dbReference>
<dbReference type="InterPro" id="IPR003593">
    <property type="entry name" value="AAA+_ATPase"/>
</dbReference>
<dbReference type="InterPro" id="IPR003838">
    <property type="entry name" value="ABC3_permease_C"/>
</dbReference>
<dbReference type="InterPro" id="IPR003439">
    <property type="entry name" value="ABC_transporter-like_ATP-bd"/>
</dbReference>
<dbReference type="InterPro" id="IPR017871">
    <property type="entry name" value="ABC_transporter-like_CS"/>
</dbReference>
<dbReference type="InterPro" id="IPR017911">
    <property type="entry name" value="MacB-like_ATP-bd"/>
</dbReference>
<dbReference type="InterPro" id="IPR025857">
    <property type="entry name" value="MacB_PCD"/>
</dbReference>
<dbReference type="InterPro" id="IPR050250">
    <property type="entry name" value="Macrolide_Exporter_MacB"/>
</dbReference>
<dbReference type="InterPro" id="IPR027417">
    <property type="entry name" value="P-loop_NTPase"/>
</dbReference>
<dbReference type="PANTHER" id="PTHR30572:SF14">
    <property type="entry name" value="MACROLIDE EXPORT ATP-BINDING_PERMEASE PROTEIN MACB"/>
    <property type="match status" value="1"/>
</dbReference>
<dbReference type="PANTHER" id="PTHR30572">
    <property type="entry name" value="MEMBRANE COMPONENT OF TRANSPORTER-RELATED"/>
    <property type="match status" value="1"/>
</dbReference>
<dbReference type="Pfam" id="PF00005">
    <property type="entry name" value="ABC_tran"/>
    <property type="match status" value="1"/>
</dbReference>
<dbReference type="Pfam" id="PF02687">
    <property type="entry name" value="FtsX"/>
    <property type="match status" value="1"/>
</dbReference>
<dbReference type="Pfam" id="PF12704">
    <property type="entry name" value="MacB_PCD"/>
    <property type="match status" value="1"/>
</dbReference>
<dbReference type="SMART" id="SM00382">
    <property type="entry name" value="AAA"/>
    <property type="match status" value="1"/>
</dbReference>
<dbReference type="SUPFAM" id="SSF52540">
    <property type="entry name" value="P-loop containing nucleoside triphosphate hydrolases"/>
    <property type="match status" value="1"/>
</dbReference>
<dbReference type="PROSITE" id="PS00211">
    <property type="entry name" value="ABC_TRANSPORTER_1"/>
    <property type="match status" value="1"/>
</dbReference>
<dbReference type="PROSITE" id="PS50893">
    <property type="entry name" value="ABC_TRANSPORTER_2"/>
    <property type="match status" value="1"/>
</dbReference>
<dbReference type="PROSITE" id="PS51267">
    <property type="entry name" value="MACB"/>
    <property type="match status" value="1"/>
</dbReference>
<protein>
    <recommendedName>
        <fullName evidence="1">Macrolide export ATP-binding/permease protein MacB</fullName>
        <ecNumber evidence="1">7.6.2.-</ecNumber>
    </recommendedName>
</protein>
<sequence>MTEPILALSHICREFMTGDTKVAALADVTLDIDRGELVAIIGSSGSGKSTLLNILGCLDHATSGSYRVAGEDVAALDADALAALRREHFGFIFQRYHLLSELPALENVEIPAVYAGDTASERQARAERLLARLGMAERRGHRPNQLSGGQQQRVSIARALMNGAEVVLADEPTGALDRRSGEEVLKILVELHREGKTIIIVTHDPEVAKRANRVIELRDGLVVSDKRTDAAVATAAASLPADKPDTRSSRWSGLAFRFRETLRMALLSMAAHRLRSFLTMLGIIIGIAAVSSVVALGNASQNKVLSDISNLGTNTIEVFPGKDFGDARAGKIKTLVLDDARALDRQTFIAGVTPTVSTSTTVRYRDRESNVLVNGVDRSYFQVKGTKIAAGALFDAVAVRNIERQAVIDDNTRRTFFSDDQNAGIGRVIWVGKVPCRVVGVIAQQQGGFGSNQNLSVYLPYTTVQAQFTGDRSLRSVLLRVSDEVSTDLAQEAVTTLLTRRHSTKDFVILNTDDIRRTITSTTQTLAFLVAAIAVISLVVGGIGVMNIMLVSVSERIGEIGVRMAVGARREDILQQFLVEATLISSLGGIAGILIAVALGALLNLLLPGFQVSYSTFSIGAAFLTSTAIGIFFGYFPARRAASFDPVVALSRE</sequence>
<proteinExistence type="inferred from homology"/>
<comment type="function">
    <text evidence="1">Non-canonical ABC transporter that contains transmembrane domains (TMD), which form a pore in the inner membrane, and an ATP-binding domain (NBD), which is responsible for energy generation. Confers resistance against macrolides.</text>
</comment>
<comment type="subunit">
    <text evidence="1">Homodimer.</text>
</comment>
<comment type="subcellular location">
    <subcellularLocation>
        <location evidence="1">Cell inner membrane</location>
        <topology evidence="1">Multi-pass membrane protein</topology>
    </subcellularLocation>
</comment>
<comment type="similarity">
    <text evidence="1">Belongs to the ABC transporter superfamily. Macrolide exporter (TC 3.A.1.122) family.</text>
</comment>
<evidence type="ECO:0000255" key="1">
    <source>
        <dbReference type="HAMAP-Rule" id="MF_01720"/>
    </source>
</evidence>
<reference key="1">
    <citation type="journal article" date="2002" name="DNA Res.">
        <title>Complete genomic sequence of nitrogen-fixing symbiotic bacterium Bradyrhizobium japonicum USDA110.</title>
        <authorList>
            <person name="Kaneko T."/>
            <person name="Nakamura Y."/>
            <person name="Sato S."/>
            <person name="Minamisawa K."/>
            <person name="Uchiumi T."/>
            <person name="Sasamoto S."/>
            <person name="Watanabe A."/>
            <person name="Idesawa K."/>
            <person name="Iriguchi M."/>
            <person name="Kawashima K."/>
            <person name="Kohara M."/>
            <person name="Matsumoto M."/>
            <person name="Shimpo S."/>
            <person name="Tsuruoka H."/>
            <person name="Wada T."/>
            <person name="Yamada M."/>
            <person name="Tabata S."/>
        </authorList>
    </citation>
    <scope>NUCLEOTIDE SEQUENCE [LARGE SCALE GENOMIC DNA]</scope>
    <source>
        <strain>JCM 10833 / BCRC 13528 / IAM 13628 / NBRC 14792 / USDA 110</strain>
    </source>
</reference>
<feature type="chain" id="PRO_0000269925" description="Macrolide export ATP-binding/permease protein MacB">
    <location>
        <begin position="1"/>
        <end position="653"/>
    </location>
</feature>
<feature type="transmembrane region" description="Helical" evidence="1">
    <location>
        <begin position="277"/>
        <end position="297"/>
    </location>
</feature>
<feature type="transmembrane region" description="Helical" evidence="1">
    <location>
        <begin position="526"/>
        <end position="546"/>
    </location>
</feature>
<feature type="transmembrane region" description="Helical" evidence="1">
    <location>
        <begin position="587"/>
        <end position="607"/>
    </location>
</feature>
<feature type="transmembrane region" description="Helical" evidence="1">
    <location>
        <begin position="617"/>
        <end position="637"/>
    </location>
</feature>
<feature type="domain" description="ABC transporter" evidence="1">
    <location>
        <begin position="6"/>
        <end position="244"/>
    </location>
</feature>
<feature type="binding site" evidence="1">
    <location>
        <begin position="42"/>
        <end position="49"/>
    </location>
    <ligand>
        <name>ATP</name>
        <dbReference type="ChEBI" id="CHEBI:30616"/>
    </ligand>
</feature>
<accession>Q89NX6</accession>
<gene>
    <name evidence="1" type="primary">macB</name>
    <name type="ordered locus">bll3707</name>
</gene>
<name>MACB_BRADU</name>